<sequence>MMLEHVLVLSAYLLSIGIYGLITSRNMVRALMCLELILNAVNMNFVTFSDLFDSRQIKGDIFSIFVIAIAAAEAAIGLAIVSSIYRNRKSTRINQSNLLNK</sequence>
<accession>Q09FQ8</accession>
<gene>
    <name evidence="1" type="primary">ndhE</name>
</gene>
<evidence type="ECO:0000255" key="1">
    <source>
        <dbReference type="HAMAP-Rule" id="MF_01456"/>
    </source>
</evidence>
<dbReference type="EC" id="7.1.1.-" evidence="1"/>
<dbReference type="EMBL" id="DQ923117">
    <property type="protein sequence ID" value="ABI49917.1"/>
    <property type="molecule type" value="Genomic_DNA"/>
</dbReference>
<dbReference type="RefSeq" id="YP_740703.1">
    <property type="nucleotide sequence ID" value="NC_008336.1"/>
</dbReference>
<dbReference type="SMR" id="Q09FQ8"/>
<dbReference type="GeneID" id="4271651"/>
<dbReference type="GO" id="GO:0009535">
    <property type="term" value="C:chloroplast thylakoid membrane"/>
    <property type="evidence" value="ECO:0007669"/>
    <property type="project" value="UniProtKB-SubCell"/>
</dbReference>
<dbReference type="GO" id="GO:0030964">
    <property type="term" value="C:NADH dehydrogenase complex"/>
    <property type="evidence" value="ECO:0007669"/>
    <property type="project" value="TreeGrafter"/>
</dbReference>
<dbReference type="GO" id="GO:0016655">
    <property type="term" value="F:oxidoreductase activity, acting on NAD(P)H, quinone or similar compound as acceptor"/>
    <property type="evidence" value="ECO:0007669"/>
    <property type="project" value="UniProtKB-UniRule"/>
</dbReference>
<dbReference type="GO" id="GO:0048038">
    <property type="term" value="F:quinone binding"/>
    <property type="evidence" value="ECO:0007669"/>
    <property type="project" value="UniProtKB-KW"/>
</dbReference>
<dbReference type="GO" id="GO:0042773">
    <property type="term" value="P:ATP synthesis coupled electron transport"/>
    <property type="evidence" value="ECO:0007669"/>
    <property type="project" value="InterPro"/>
</dbReference>
<dbReference type="GO" id="GO:0019684">
    <property type="term" value="P:photosynthesis, light reaction"/>
    <property type="evidence" value="ECO:0007669"/>
    <property type="project" value="UniProtKB-UniRule"/>
</dbReference>
<dbReference type="FunFam" id="1.10.287.3510:FF:000001">
    <property type="entry name" value="NADH-quinone oxidoreductase subunit K"/>
    <property type="match status" value="1"/>
</dbReference>
<dbReference type="Gene3D" id="1.10.287.3510">
    <property type="match status" value="1"/>
</dbReference>
<dbReference type="HAMAP" id="MF_01456">
    <property type="entry name" value="NDH1_NuoK"/>
    <property type="match status" value="1"/>
</dbReference>
<dbReference type="InterPro" id="IPR001133">
    <property type="entry name" value="NADH_UbQ_OxRdtase_chain4L/K"/>
</dbReference>
<dbReference type="InterPro" id="IPR039428">
    <property type="entry name" value="NUOK/Mnh_C1-like"/>
</dbReference>
<dbReference type="NCBIfam" id="NF004320">
    <property type="entry name" value="PRK05715.1-2"/>
    <property type="match status" value="1"/>
</dbReference>
<dbReference type="NCBIfam" id="NF004322">
    <property type="entry name" value="PRK05715.1-4"/>
    <property type="match status" value="1"/>
</dbReference>
<dbReference type="PANTHER" id="PTHR11434:SF16">
    <property type="entry name" value="NADH-UBIQUINONE OXIDOREDUCTASE CHAIN 4L"/>
    <property type="match status" value="1"/>
</dbReference>
<dbReference type="PANTHER" id="PTHR11434">
    <property type="entry name" value="NADH-UBIQUINONE OXIDOREDUCTASE SUBUNIT ND4L"/>
    <property type="match status" value="1"/>
</dbReference>
<dbReference type="Pfam" id="PF00420">
    <property type="entry name" value="Oxidored_q2"/>
    <property type="match status" value="1"/>
</dbReference>
<organism>
    <name type="scientific">Nandina domestica</name>
    <name type="common">Heavenly bamboo</name>
    <dbReference type="NCBI Taxonomy" id="41776"/>
    <lineage>
        <taxon>Eukaryota</taxon>
        <taxon>Viridiplantae</taxon>
        <taxon>Streptophyta</taxon>
        <taxon>Embryophyta</taxon>
        <taxon>Tracheophyta</taxon>
        <taxon>Spermatophyta</taxon>
        <taxon>Magnoliopsida</taxon>
        <taxon>Ranunculales</taxon>
        <taxon>Berberidaceae</taxon>
        <taxon>Nandinoideae</taxon>
        <taxon>Nandineae</taxon>
        <taxon>Nandina</taxon>
    </lineage>
</organism>
<comment type="function">
    <text evidence="1">NDH shuttles electrons from NAD(P)H:plastoquinone, via FMN and iron-sulfur (Fe-S) centers, to quinones in the photosynthetic chain and possibly in a chloroplast respiratory chain. The immediate electron acceptor for the enzyme in this species is believed to be plastoquinone. Couples the redox reaction to proton translocation, and thus conserves the redox energy in a proton gradient.</text>
</comment>
<comment type="catalytic activity">
    <reaction evidence="1">
        <text>a plastoquinone + NADH + (n+1) H(+)(in) = a plastoquinol + NAD(+) + n H(+)(out)</text>
        <dbReference type="Rhea" id="RHEA:42608"/>
        <dbReference type="Rhea" id="RHEA-COMP:9561"/>
        <dbReference type="Rhea" id="RHEA-COMP:9562"/>
        <dbReference type="ChEBI" id="CHEBI:15378"/>
        <dbReference type="ChEBI" id="CHEBI:17757"/>
        <dbReference type="ChEBI" id="CHEBI:57540"/>
        <dbReference type="ChEBI" id="CHEBI:57945"/>
        <dbReference type="ChEBI" id="CHEBI:62192"/>
    </reaction>
</comment>
<comment type="catalytic activity">
    <reaction evidence="1">
        <text>a plastoquinone + NADPH + (n+1) H(+)(in) = a plastoquinol + NADP(+) + n H(+)(out)</text>
        <dbReference type="Rhea" id="RHEA:42612"/>
        <dbReference type="Rhea" id="RHEA-COMP:9561"/>
        <dbReference type="Rhea" id="RHEA-COMP:9562"/>
        <dbReference type="ChEBI" id="CHEBI:15378"/>
        <dbReference type="ChEBI" id="CHEBI:17757"/>
        <dbReference type="ChEBI" id="CHEBI:57783"/>
        <dbReference type="ChEBI" id="CHEBI:58349"/>
        <dbReference type="ChEBI" id="CHEBI:62192"/>
    </reaction>
</comment>
<comment type="subunit">
    <text evidence="1">NDH is composed of at least 16 different subunits, 5 of which are encoded in the nucleus.</text>
</comment>
<comment type="subcellular location">
    <subcellularLocation>
        <location evidence="1">Plastid</location>
        <location evidence="1">Chloroplast thylakoid membrane</location>
        <topology evidence="1">Multi-pass membrane protein</topology>
    </subcellularLocation>
</comment>
<comment type="similarity">
    <text evidence="1">Belongs to the complex I subunit 4L family.</text>
</comment>
<name>NU4LC_NANDO</name>
<feature type="chain" id="PRO_0000360346" description="NAD(P)H-quinone oxidoreductase subunit 4L, chloroplastic">
    <location>
        <begin position="1"/>
        <end position="101"/>
    </location>
</feature>
<feature type="transmembrane region" description="Helical" evidence="1">
    <location>
        <begin position="2"/>
        <end position="22"/>
    </location>
</feature>
<feature type="transmembrane region" description="Helical" evidence="1">
    <location>
        <begin position="32"/>
        <end position="52"/>
    </location>
</feature>
<feature type="transmembrane region" description="Helical" evidence="1">
    <location>
        <begin position="61"/>
        <end position="81"/>
    </location>
</feature>
<proteinExistence type="inferred from homology"/>
<keyword id="KW-0150">Chloroplast</keyword>
<keyword id="KW-0472">Membrane</keyword>
<keyword id="KW-0520">NAD</keyword>
<keyword id="KW-0521">NADP</keyword>
<keyword id="KW-0934">Plastid</keyword>
<keyword id="KW-0618">Plastoquinone</keyword>
<keyword id="KW-0874">Quinone</keyword>
<keyword id="KW-0793">Thylakoid</keyword>
<keyword id="KW-1278">Translocase</keyword>
<keyword id="KW-0812">Transmembrane</keyword>
<keyword id="KW-1133">Transmembrane helix</keyword>
<keyword id="KW-0813">Transport</keyword>
<geneLocation type="chloroplast"/>
<protein>
    <recommendedName>
        <fullName evidence="1">NAD(P)H-quinone oxidoreductase subunit 4L, chloroplastic</fullName>
        <ecNumber evidence="1">7.1.1.-</ecNumber>
    </recommendedName>
    <alternativeName>
        <fullName evidence="1">NAD(P)H dehydrogenase subunit 4L</fullName>
    </alternativeName>
    <alternativeName>
        <fullName evidence="1">NADH-plastoquinone oxidoreductase subunit 4L</fullName>
    </alternativeName>
</protein>
<reference key="1">
    <citation type="journal article" date="2006" name="BMC Plant Biol.">
        <title>Rapid and accurate pyrosequencing of angiosperm plastid genomes.</title>
        <authorList>
            <person name="Moore M.J."/>
            <person name="Dhingra A."/>
            <person name="Soltis P.S."/>
            <person name="Shaw R."/>
            <person name="Farmerie W.G."/>
            <person name="Folta K.M."/>
            <person name="Soltis D.E."/>
        </authorList>
    </citation>
    <scope>NUCLEOTIDE SEQUENCE [LARGE SCALE GENOMIC DNA]</scope>
</reference>